<accession>Q87N03</accession>
<dbReference type="EMBL" id="BA000031">
    <property type="protein sequence ID" value="BAC60336.1"/>
    <property type="molecule type" value="Genomic_DNA"/>
</dbReference>
<dbReference type="RefSeq" id="NP_798452.1">
    <property type="nucleotide sequence ID" value="NC_004603.1"/>
</dbReference>
<dbReference type="RefSeq" id="WP_005482409.1">
    <property type="nucleotide sequence ID" value="NC_004603.1"/>
</dbReference>
<dbReference type="SMR" id="Q87N03"/>
<dbReference type="GeneID" id="1189584"/>
<dbReference type="KEGG" id="vpa:VP2073"/>
<dbReference type="PATRIC" id="fig|223926.6.peg.1983"/>
<dbReference type="eggNOG" id="COG1495">
    <property type="taxonomic scope" value="Bacteria"/>
</dbReference>
<dbReference type="HOGENOM" id="CLU_098660_2_0_6"/>
<dbReference type="Proteomes" id="UP000002493">
    <property type="component" value="Chromosome 1"/>
</dbReference>
<dbReference type="GO" id="GO:0005886">
    <property type="term" value="C:plasma membrane"/>
    <property type="evidence" value="ECO:0007669"/>
    <property type="project" value="UniProtKB-SubCell"/>
</dbReference>
<dbReference type="GO" id="GO:0009055">
    <property type="term" value="F:electron transfer activity"/>
    <property type="evidence" value="ECO:0007669"/>
    <property type="project" value="UniProtKB-UniRule"/>
</dbReference>
<dbReference type="GO" id="GO:0015035">
    <property type="term" value="F:protein-disulfide reductase activity"/>
    <property type="evidence" value="ECO:0007669"/>
    <property type="project" value="UniProtKB-UniRule"/>
</dbReference>
<dbReference type="GO" id="GO:0006457">
    <property type="term" value="P:protein folding"/>
    <property type="evidence" value="ECO:0007669"/>
    <property type="project" value="InterPro"/>
</dbReference>
<dbReference type="Gene3D" id="1.20.1550.10">
    <property type="entry name" value="DsbB-like"/>
    <property type="match status" value="1"/>
</dbReference>
<dbReference type="HAMAP" id="MF_00286">
    <property type="entry name" value="DsbB"/>
    <property type="match status" value="1"/>
</dbReference>
<dbReference type="InterPro" id="IPR003752">
    <property type="entry name" value="DiS_bond_form_DsbB/BdbC"/>
</dbReference>
<dbReference type="InterPro" id="IPR022920">
    <property type="entry name" value="Disulphide_bond_form_DsbB"/>
</dbReference>
<dbReference type="InterPro" id="IPR050183">
    <property type="entry name" value="DsbB"/>
</dbReference>
<dbReference type="InterPro" id="IPR023380">
    <property type="entry name" value="DsbB-like_sf"/>
</dbReference>
<dbReference type="NCBIfam" id="NF002485">
    <property type="entry name" value="PRK01749.1"/>
    <property type="match status" value="1"/>
</dbReference>
<dbReference type="PANTHER" id="PTHR36570">
    <property type="entry name" value="DISULFIDE BOND FORMATION PROTEIN B"/>
    <property type="match status" value="1"/>
</dbReference>
<dbReference type="PANTHER" id="PTHR36570:SF2">
    <property type="entry name" value="DISULFIDE BOND FORMATION PROTEIN B"/>
    <property type="match status" value="1"/>
</dbReference>
<dbReference type="Pfam" id="PF02600">
    <property type="entry name" value="DsbB"/>
    <property type="match status" value="1"/>
</dbReference>
<dbReference type="SUPFAM" id="SSF158442">
    <property type="entry name" value="DsbB-like"/>
    <property type="match status" value="1"/>
</dbReference>
<evidence type="ECO:0000255" key="1">
    <source>
        <dbReference type="HAMAP-Rule" id="MF_00286"/>
    </source>
</evidence>
<reference key="1">
    <citation type="journal article" date="2003" name="Lancet">
        <title>Genome sequence of Vibrio parahaemolyticus: a pathogenic mechanism distinct from that of V. cholerae.</title>
        <authorList>
            <person name="Makino K."/>
            <person name="Oshima K."/>
            <person name="Kurokawa K."/>
            <person name="Yokoyama K."/>
            <person name="Uda T."/>
            <person name="Tagomori K."/>
            <person name="Iijima Y."/>
            <person name="Najima M."/>
            <person name="Nakano M."/>
            <person name="Yamashita A."/>
            <person name="Kubota Y."/>
            <person name="Kimura S."/>
            <person name="Yasunaga T."/>
            <person name="Honda T."/>
            <person name="Shinagawa H."/>
            <person name="Hattori M."/>
            <person name="Iida T."/>
        </authorList>
    </citation>
    <scope>NUCLEOTIDE SEQUENCE [LARGE SCALE GENOMIC DNA]</scope>
    <source>
        <strain>RIMD 2210633</strain>
    </source>
</reference>
<comment type="function">
    <text evidence="1">Required for disulfide bond formation in some periplasmic proteins. Acts by oxidizing the DsbA protein.</text>
</comment>
<comment type="subcellular location">
    <subcellularLocation>
        <location evidence="1">Cell inner membrane</location>
        <topology evidence="1">Multi-pass membrane protein</topology>
    </subcellularLocation>
</comment>
<comment type="similarity">
    <text evidence="1">Belongs to the DsbB family.</text>
</comment>
<feature type="chain" id="PRO_0000059362" description="Disulfide bond formation protein B">
    <location>
        <begin position="1"/>
        <end position="178"/>
    </location>
</feature>
<feature type="topological domain" description="Cytoplasmic" evidence="1">
    <location>
        <begin position="1"/>
        <end position="16"/>
    </location>
</feature>
<feature type="transmembrane region" description="Helical" evidence="1">
    <location>
        <begin position="17"/>
        <end position="33"/>
    </location>
</feature>
<feature type="topological domain" description="Periplasmic" evidence="1">
    <location>
        <begin position="34"/>
        <end position="51"/>
    </location>
</feature>
<feature type="transmembrane region" description="Helical" evidence="1">
    <location>
        <begin position="52"/>
        <end position="67"/>
    </location>
</feature>
<feature type="topological domain" description="Cytoplasmic" evidence="1">
    <location>
        <begin position="68"/>
        <end position="74"/>
    </location>
</feature>
<feature type="transmembrane region" description="Helical" evidence="1">
    <location>
        <begin position="75"/>
        <end position="92"/>
    </location>
</feature>
<feature type="topological domain" description="Periplasmic" evidence="1">
    <location>
        <begin position="93"/>
        <end position="147"/>
    </location>
</feature>
<feature type="transmembrane region" description="Helical" evidence="1">
    <location>
        <begin position="148"/>
        <end position="166"/>
    </location>
</feature>
<feature type="topological domain" description="Cytoplasmic" evidence="1">
    <location>
        <begin position="167"/>
        <end position="178"/>
    </location>
</feature>
<feature type="disulfide bond" description="Redox-active" evidence="1">
    <location>
        <begin position="43"/>
        <end position="46"/>
    </location>
</feature>
<feature type="disulfide bond" description="Redox-active" evidence="1">
    <location>
        <begin position="107"/>
        <end position="133"/>
    </location>
</feature>
<name>DSBB_VIBPA</name>
<protein>
    <recommendedName>
        <fullName evidence="1">Disulfide bond formation protein B</fullName>
    </recommendedName>
    <alternativeName>
        <fullName evidence="1">Disulfide oxidoreductase</fullName>
    </alternativeName>
</protein>
<keyword id="KW-0997">Cell inner membrane</keyword>
<keyword id="KW-1003">Cell membrane</keyword>
<keyword id="KW-0143">Chaperone</keyword>
<keyword id="KW-1015">Disulfide bond</keyword>
<keyword id="KW-0249">Electron transport</keyword>
<keyword id="KW-0472">Membrane</keyword>
<keyword id="KW-0560">Oxidoreductase</keyword>
<keyword id="KW-0676">Redox-active center</keyword>
<keyword id="KW-0812">Transmembrane</keyword>
<keyword id="KW-1133">Transmembrane helix</keyword>
<keyword id="KW-0813">Transport</keyword>
<gene>
    <name evidence="1" type="primary">dsbB</name>
    <name type="ordered locus">VP2073</name>
</gene>
<organism>
    <name type="scientific">Vibrio parahaemolyticus serotype O3:K6 (strain RIMD 2210633)</name>
    <dbReference type="NCBI Taxonomy" id="223926"/>
    <lineage>
        <taxon>Bacteria</taxon>
        <taxon>Pseudomonadati</taxon>
        <taxon>Pseudomonadota</taxon>
        <taxon>Gammaproteobacteria</taxon>
        <taxon>Vibrionales</taxon>
        <taxon>Vibrionaceae</taxon>
        <taxon>Vibrio</taxon>
    </lineage>
</organism>
<proteinExistence type="inferred from homology"/>
<sequence>MTIFSSLNQFSKGHVSWLLLLLFIIFFEACALYFQHVMMLAPCVMCIYERVAMMGIGGAAIIGLIAPNNALFRWLGLIGWGLSSYKGLMLAMQHVDYQFNPSPFATCDLFVTFPSWAPLNQWVPWMFEAYGDCSKIVWQFFDLSMPQWLVVIFAGNLVALALIVIAQFFPVKRKNPIR</sequence>